<proteinExistence type="evidence at protein level"/>
<keyword id="KW-1217">Cell adhesion impairing toxin</keyword>
<keyword id="KW-0903">Direct protein sequencing</keyword>
<keyword id="KW-1015">Disulfide bond</keyword>
<keyword id="KW-1199">Hemostasis impairing toxin</keyword>
<keyword id="KW-1201">Platelet aggregation inhibiting toxin</keyword>
<keyword id="KW-0964">Secreted</keyword>
<keyword id="KW-0800">Toxin</keyword>
<sequence>MNSGNPCCDPVTCKPRRGEHCVSGPCCRNCKFLNAGTICKRARGDDMNDYCTGISPDCPRNPWKG</sequence>
<comment type="function">
    <text evidence="2">Poor inhibitor of platelet aggregation. The disintegrin inhibits the adhesion of cells expressing the RGD-dependent integrin alpha-5/beta-1 (ITGA5/ITGB1) to immobilized fibronectin. Inhibition on alpha-2b/beta-3 (ITGA2B/ITGB3) is low.</text>
</comment>
<comment type="subunit">
    <text evidence="2">Homodimer; disulfide-linked.</text>
</comment>
<comment type="subcellular location">
    <subcellularLocation>
        <location evidence="2">Secreted</location>
    </subcellularLocation>
</comment>
<comment type="tissue specificity">
    <text>Expressed by the venom gland.</text>
</comment>
<comment type="mass spectrometry">
    <text>Homodimer.</text>
</comment>
<comment type="miscellaneous">
    <text evidence="4">Does no inhibit alpha-1/beta-1 (ITGA1/ITGB1), alpha-2/beta-1 (ITGA2/ITGB1) and alpha-6/beta-1 (ITGA6/ITGB1).</text>
</comment>
<comment type="similarity">
    <text evidence="3">Belongs to the disintegrin family. Dimeric disintegrin subfamily.</text>
</comment>
<name>DID4_MACLO</name>
<reference key="1">
    <citation type="journal article" date="2003" name="Biochem. J.">
        <title>Snake venom disintegrins: novel dimeric disintegrins and structural diversification by disulphide bond engineering.</title>
        <authorList>
            <person name="Calvete J.J."/>
            <person name="Moreno-Murciano M.P."/>
            <person name="Theakston R.D.G."/>
            <person name="Kisiel D.G."/>
            <person name="Marcinkiewicz C."/>
        </authorList>
    </citation>
    <scope>PROTEIN SEQUENCE</scope>
    <scope>FUNCTION</scope>
    <scope>SUBUNIT</scope>
    <scope>SUBCELLULAR LOCATION</scope>
    <scope>MASS SPECTROMETRY</scope>
    <source>
        <tissue>Venom</tissue>
    </source>
</reference>
<accession>P0C6A8</accession>
<feature type="chain" id="PRO_0000319023" description="Disintegrin VLO4">
    <location>
        <begin position="1"/>
        <end position="65"/>
    </location>
</feature>
<feature type="domain" description="Disintegrin" evidence="1">
    <location>
        <begin position="1"/>
        <end position="65"/>
    </location>
</feature>
<feature type="short sequence motif" description="Cell attachment site">
    <location>
        <begin position="43"/>
        <end position="45"/>
    </location>
</feature>
<feature type="disulfide bond" evidence="1">
    <location>
        <begin position="7"/>
        <end position="30"/>
    </location>
</feature>
<feature type="disulfide bond" description="Interchain (with C-8)" evidence="1">
    <location>
        <position position="8"/>
    </location>
</feature>
<feature type="disulfide bond" description="Interchain (with C-13)" evidence="1">
    <location>
        <position position="13"/>
    </location>
</feature>
<feature type="disulfide bond" evidence="1">
    <location>
        <begin position="21"/>
        <end position="27"/>
    </location>
</feature>
<feature type="disulfide bond" evidence="1">
    <location>
        <begin position="26"/>
        <end position="51"/>
    </location>
</feature>
<feature type="disulfide bond" evidence="1">
    <location>
        <begin position="39"/>
        <end position="58"/>
    </location>
</feature>
<evidence type="ECO:0000255" key="1">
    <source>
        <dbReference type="PROSITE-ProRule" id="PRU00068"/>
    </source>
</evidence>
<evidence type="ECO:0000269" key="2">
    <source>
    </source>
</evidence>
<evidence type="ECO:0000305" key="3"/>
<evidence type="ECO:0000305" key="4">
    <source>
    </source>
</evidence>
<dbReference type="SMR" id="P0C6A8"/>
<dbReference type="GO" id="GO:0005576">
    <property type="term" value="C:extracellular region"/>
    <property type="evidence" value="ECO:0007669"/>
    <property type="project" value="UniProtKB-SubCell"/>
</dbReference>
<dbReference type="GO" id="GO:0090729">
    <property type="term" value="F:toxin activity"/>
    <property type="evidence" value="ECO:0007669"/>
    <property type="project" value="UniProtKB-KW"/>
</dbReference>
<dbReference type="Gene3D" id="4.10.70.10">
    <property type="entry name" value="Disintegrin domain"/>
    <property type="match status" value="1"/>
</dbReference>
<dbReference type="InterPro" id="IPR018358">
    <property type="entry name" value="Disintegrin_CS"/>
</dbReference>
<dbReference type="InterPro" id="IPR001762">
    <property type="entry name" value="Disintegrin_dom"/>
</dbReference>
<dbReference type="InterPro" id="IPR036436">
    <property type="entry name" value="Disintegrin_dom_sf"/>
</dbReference>
<dbReference type="PANTHER" id="PTHR11905">
    <property type="entry name" value="ADAM A DISINTEGRIN AND METALLOPROTEASE DOMAIN"/>
    <property type="match status" value="1"/>
</dbReference>
<dbReference type="PANTHER" id="PTHR11905:SF159">
    <property type="entry name" value="ADAM METALLOPROTEASE"/>
    <property type="match status" value="1"/>
</dbReference>
<dbReference type="Pfam" id="PF00200">
    <property type="entry name" value="Disintegrin"/>
    <property type="match status" value="1"/>
</dbReference>
<dbReference type="PRINTS" id="PR00289">
    <property type="entry name" value="DISINTEGRIN"/>
</dbReference>
<dbReference type="SMART" id="SM00050">
    <property type="entry name" value="DISIN"/>
    <property type="match status" value="1"/>
</dbReference>
<dbReference type="SUPFAM" id="SSF57552">
    <property type="entry name" value="Blood coagulation inhibitor (disintegrin)"/>
    <property type="match status" value="1"/>
</dbReference>
<dbReference type="PROSITE" id="PS00427">
    <property type="entry name" value="DISINTEGRIN_1"/>
    <property type="match status" value="1"/>
</dbReference>
<dbReference type="PROSITE" id="PS50214">
    <property type="entry name" value="DISINTEGRIN_2"/>
    <property type="match status" value="1"/>
</dbReference>
<protein>
    <recommendedName>
        <fullName>Disintegrin VLO4</fullName>
    </recommendedName>
</protein>
<organism>
    <name type="scientific">Macrovipera lebetina obtusa</name>
    <name type="common">Levant blunt-nosed viper</name>
    <name type="synonym">Vipera lebetina obtusa</name>
    <dbReference type="NCBI Taxonomy" id="209528"/>
    <lineage>
        <taxon>Eukaryota</taxon>
        <taxon>Metazoa</taxon>
        <taxon>Chordata</taxon>
        <taxon>Craniata</taxon>
        <taxon>Vertebrata</taxon>
        <taxon>Euteleostomi</taxon>
        <taxon>Lepidosauria</taxon>
        <taxon>Squamata</taxon>
        <taxon>Bifurcata</taxon>
        <taxon>Unidentata</taxon>
        <taxon>Episquamata</taxon>
        <taxon>Toxicofera</taxon>
        <taxon>Serpentes</taxon>
        <taxon>Colubroidea</taxon>
        <taxon>Viperidae</taxon>
        <taxon>Viperinae</taxon>
        <taxon>Macrovipera</taxon>
        <taxon>Macrovipera lebetinus</taxon>
    </lineage>
</organism>